<proteinExistence type="inferred from homology"/>
<name>COW_CONEA</name>
<reference key="1">
    <citation type="journal article" date="2017" name="J. Proteome Res.">
        <title>Contryphan genes and mature peptides in the venom of nine cone snail species by transcriptomic and mass spectrometric analysis.</title>
        <authorList>
            <person name="Vijayasarathy M."/>
            <person name="Basheer S.M."/>
            <person name="Franklin J.B."/>
            <person name="Balaram P."/>
        </authorList>
    </citation>
    <scope>NUCLEOTIDE SEQUENCE [MRNA]</scope>
    <source>
        <tissue>Venom duct</tissue>
    </source>
</reference>
<dbReference type="EMBL" id="KX289877">
    <property type="protein sequence ID" value="APX52854.1"/>
    <property type="molecule type" value="mRNA"/>
</dbReference>
<dbReference type="ConoServer" id="9755">
    <property type="toxin name" value="Contryphan-Eb precursor"/>
</dbReference>
<dbReference type="GO" id="GO:0005576">
    <property type="term" value="C:extracellular region"/>
    <property type="evidence" value="ECO:0007669"/>
    <property type="project" value="UniProtKB-SubCell"/>
</dbReference>
<dbReference type="GO" id="GO:0008200">
    <property type="term" value="F:ion channel inhibitor activity"/>
    <property type="evidence" value="ECO:0007669"/>
    <property type="project" value="InterPro"/>
</dbReference>
<dbReference type="GO" id="GO:0090729">
    <property type="term" value="F:toxin activity"/>
    <property type="evidence" value="ECO:0007669"/>
    <property type="project" value="UniProtKB-KW"/>
</dbReference>
<dbReference type="InterPro" id="IPR004214">
    <property type="entry name" value="Conotoxin"/>
</dbReference>
<dbReference type="InterPro" id="IPR011062">
    <property type="entry name" value="Contryphan_CS"/>
</dbReference>
<dbReference type="Pfam" id="PF02950">
    <property type="entry name" value="Conotoxin"/>
    <property type="match status" value="1"/>
</dbReference>
<dbReference type="PROSITE" id="PS60027">
    <property type="entry name" value="CONTRYPHAN"/>
    <property type="match status" value="1"/>
</dbReference>
<organism>
    <name type="scientific">Conus ebraeus</name>
    <name type="common">Hebrew cone</name>
    <dbReference type="NCBI Taxonomy" id="89425"/>
    <lineage>
        <taxon>Eukaryota</taxon>
        <taxon>Metazoa</taxon>
        <taxon>Spiralia</taxon>
        <taxon>Lophotrochozoa</taxon>
        <taxon>Mollusca</taxon>
        <taxon>Gastropoda</taxon>
        <taxon>Caenogastropoda</taxon>
        <taxon>Neogastropoda</taxon>
        <taxon>Conoidea</taxon>
        <taxon>Conidae</taxon>
        <taxon>Conus</taxon>
        <taxon>Virroconus</taxon>
    </lineage>
</organism>
<accession>A0A1P8NVS9</accession>
<sequence length="63" mass="6673">MGKLTILVLVAAVLLSTQVMVQGDADQPADRDAVPRDDNPGGTSGKLMNVLIRSGCPWHPWCG</sequence>
<protein>
    <recommendedName>
        <fullName evidence="9">Contryphan-Eb</fullName>
    </recommendedName>
</protein>
<keyword id="KW-0027">Amidation</keyword>
<keyword id="KW-0208">D-amino acid</keyword>
<keyword id="KW-1015">Disulfide bond</keyword>
<keyword id="KW-0379">Hydroxylation</keyword>
<keyword id="KW-0872">Ion channel impairing toxin</keyword>
<keyword id="KW-0528">Neurotoxin</keyword>
<keyword id="KW-0964">Secreted</keyword>
<keyword id="KW-0732">Signal</keyword>
<keyword id="KW-0800">Toxin</keyword>
<feature type="signal peptide" evidence="7">
    <location>
        <begin position="1"/>
        <end position="23"/>
    </location>
</feature>
<feature type="propeptide" id="PRO_0000445129" evidence="9">
    <location>
        <begin position="24"/>
        <end position="54"/>
    </location>
</feature>
<feature type="peptide" id="PRO_5012591469" description="Contryphan-Eb" evidence="9">
    <location>
        <begin position="55"/>
        <end position="62"/>
    </location>
</feature>
<feature type="region of interest" description="Disordered" evidence="8">
    <location>
        <begin position="24"/>
        <end position="46"/>
    </location>
</feature>
<feature type="compositionally biased region" description="Basic and acidic residues" evidence="8">
    <location>
        <begin position="28"/>
        <end position="39"/>
    </location>
</feature>
<feature type="modified residue" description="4-hydroxyproline" evidence="3">
    <location>
        <position position="57"/>
    </location>
</feature>
<feature type="modified residue" description="D-tryptophan" evidence="3">
    <location>
        <position position="58"/>
    </location>
</feature>
<feature type="modified residue" description="Cysteine amide" evidence="3">
    <location>
        <position position="62"/>
    </location>
</feature>
<feature type="disulfide bond" evidence="3">
    <location>
        <begin position="56"/>
        <end position="62"/>
    </location>
</feature>
<comment type="function">
    <text evidence="1 2 5 6">Its target is unknown, but this toxin may modulate voltage-activated calcium channels (Cav) or calcium-dependent potassium channels (KCa).</text>
</comment>
<comment type="subcellular location">
    <subcellularLocation>
        <location evidence="10">Secreted</location>
    </subcellularLocation>
</comment>
<comment type="tissue specificity">
    <text evidence="10">Expressed by the venom duct.</text>
</comment>
<comment type="domain">
    <text evidence="9">The cysteine framework is C-C.</text>
</comment>
<comment type="miscellaneous">
    <text evidence="4">Exists in two forms, due to cis-trans isomerization at 56-Cys-hydroxyPro-57. The cis conformation is the major form.</text>
</comment>
<comment type="similarity">
    <text evidence="9">Belongs to the O2 superfamily. Contryphan family.</text>
</comment>
<evidence type="ECO:0000250" key="1">
    <source>
        <dbReference type="UniProtKB" id="P0C248"/>
    </source>
</evidence>
<evidence type="ECO:0000250" key="2">
    <source>
        <dbReference type="UniProtKB" id="P0C250"/>
    </source>
</evidence>
<evidence type="ECO:0000250" key="3">
    <source>
        <dbReference type="UniProtKB" id="P58786"/>
    </source>
</evidence>
<evidence type="ECO:0000250" key="4">
    <source>
        <dbReference type="UniProtKB" id="P58787"/>
    </source>
</evidence>
<evidence type="ECO:0000250" key="5">
    <source>
        <dbReference type="UniProtKB" id="P62903"/>
    </source>
</evidence>
<evidence type="ECO:0000250" key="6">
    <source>
        <dbReference type="UniProtKB" id="P83047"/>
    </source>
</evidence>
<evidence type="ECO:0000255" key="7"/>
<evidence type="ECO:0000256" key="8">
    <source>
        <dbReference type="SAM" id="MobiDB-lite"/>
    </source>
</evidence>
<evidence type="ECO:0000305" key="9"/>
<evidence type="ECO:0000305" key="10">
    <source>
    </source>
</evidence>